<accession>P00074</accession>
<evidence type="ECO:0000255" key="1">
    <source>
        <dbReference type="PROSITE-ProRule" id="PRU00433"/>
    </source>
</evidence>
<evidence type="ECO:0000269" key="2">
    <source>
    </source>
</evidence>
<evidence type="ECO:0000305" key="3"/>
<proteinExistence type="evidence at protein level"/>
<comment type="function">
    <text>Electron carrier protein. The oxidized form of the cytochrome c heme group can accept an electron from the heme group of the cytochrome c1 subunit of cytochrome reductase. Cytochrome c then transfers this electron to the cytochrome oxidase complex, the final protein carrier in the mitochondrial electron-transport chain.</text>
</comment>
<comment type="subcellular location">
    <subcellularLocation>
        <location>Mitochondrion intermembrane space</location>
    </subcellularLocation>
    <text>Loosely associated with the inner membrane.</text>
</comment>
<comment type="PTM">
    <text>Binds 1 heme c group covalently per subunit.</text>
</comment>
<comment type="miscellaneous">
    <text>There is one amide at position 24 or 29, probably one at 69 or 70, and one at 97 or 98.</text>
</comment>
<comment type="similarity">
    <text evidence="3">Belongs to the cytochrome c family.</text>
</comment>
<comment type="online information" name="Protein Spotlight">
    <link uri="https://www.proteinspotlight.org/back_issues/076"/>
    <text>Life shuttle - Issue 76 of November 2006</text>
</comment>
<organism>
    <name type="scientific">Ginkgo biloba</name>
    <name type="common">Ginkgo</name>
    <name type="synonym">Maidenhair tree</name>
    <dbReference type="NCBI Taxonomy" id="3311"/>
    <lineage>
        <taxon>Eukaryota</taxon>
        <taxon>Viridiplantae</taxon>
        <taxon>Streptophyta</taxon>
        <taxon>Embryophyta</taxon>
        <taxon>Tracheophyta</taxon>
        <taxon>Spermatophyta</taxon>
        <taxon>Ginkgoidae</taxon>
        <taxon>Ginkgoales</taxon>
        <taxon>Ginkgoaceae</taxon>
        <taxon>Ginkgo</taxon>
    </lineage>
</organism>
<feature type="chain" id="PRO_0000108296" description="Cytochrome c">
    <location>
        <begin position="1"/>
        <end position="113"/>
    </location>
</feature>
<feature type="binding site" description="covalent" evidence="1 2">
    <location>
        <position position="22"/>
    </location>
    <ligand>
        <name>heme c</name>
        <dbReference type="ChEBI" id="CHEBI:61717"/>
    </ligand>
</feature>
<feature type="binding site" description="covalent" evidence="1 2">
    <location>
        <position position="25"/>
    </location>
    <ligand>
        <name>heme c</name>
        <dbReference type="ChEBI" id="CHEBI:61717"/>
    </ligand>
</feature>
<feature type="binding site" description="axial binding residue">
    <location>
        <position position="26"/>
    </location>
    <ligand>
        <name>heme c</name>
        <dbReference type="ChEBI" id="CHEBI:61717"/>
    </ligand>
    <ligandPart>
        <name>Fe</name>
        <dbReference type="ChEBI" id="CHEBI:18248"/>
    </ligandPart>
</feature>
<feature type="binding site" description="axial binding residue">
    <location>
        <position position="88"/>
    </location>
    <ligand>
        <name>heme c</name>
        <dbReference type="ChEBI" id="CHEBI:61717"/>
    </ligand>
    <ligandPart>
        <name>Fe</name>
        <dbReference type="ChEBI" id="CHEBI:18248"/>
    </ligandPart>
</feature>
<feature type="modified residue" description="N-acetylalanine" evidence="2">
    <location>
        <position position="1"/>
    </location>
</feature>
<feature type="modified residue" description="N6,N6,N6-trimethyllysine" evidence="2">
    <location>
        <position position="80"/>
    </location>
</feature>
<feature type="modified residue" description="N6,N6,N6-trimethyllysine" evidence="2">
    <location>
        <position position="94"/>
    </location>
</feature>
<dbReference type="PIR" id="A00066">
    <property type="entry name" value="CCGK"/>
</dbReference>
<dbReference type="iPTMnet" id="P00074"/>
<dbReference type="GO" id="GO:0005758">
    <property type="term" value="C:mitochondrial intermembrane space"/>
    <property type="evidence" value="ECO:0007669"/>
    <property type="project" value="UniProtKB-SubCell"/>
</dbReference>
<dbReference type="GO" id="GO:0009055">
    <property type="term" value="F:electron transfer activity"/>
    <property type="evidence" value="ECO:0007669"/>
    <property type="project" value="InterPro"/>
</dbReference>
<dbReference type="GO" id="GO:0020037">
    <property type="term" value="F:heme binding"/>
    <property type="evidence" value="ECO:0007669"/>
    <property type="project" value="InterPro"/>
</dbReference>
<dbReference type="GO" id="GO:0046872">
    <property type="term" value="F:metal ion binding"/>
    <property type="evidence" value="ECO:0007669"/>
    <property type="project" value="UniProtKB-KW"/>
</dbReference>
<dbReference type="FunFam" id="1.10.760.10:FF:000001">
    <property type="entry name" value="Cytochrome c iso-1"/>
    <property type="match status" value="1"/>
</dbReference>
<dbReference type="Gene3D" id="1.10.760.10">
    <property type="entry name" value="Cytochrome c-like domain"/>
    <property type="match status" value="1"/>
</dbReference>
<dbReference type="InterPro" id="IPR009056">
    <property type="entry name" value="Cyt_c-like_dom"/>
</dbReference>
<dbReference type="InterPro" id="IPR036909">
    <property type="entry name" value="Cyt_c-like_dom_sf"/>
</dbReference>
<dbReference type="InterPro" id="IPR002327">
    <property type="entry name" value="Cyt_c_1A/1B"/>
</dbReference>
<dbReference type="PANTHER" id="PTHR11961">
    <property type="entry name" value="CYTOCHROME C"/>
    <property type="match status" value="1"/>
</dbReference>
<dbReference type="Pfam" id="PF00034">
    <property type="entry name" value="Cytochrom_C"/>
    <property type="match status" value="1"/>
</dbReference>
<dbReference type="PRINTS" id="PR00604">
    <property type="entry name" value="CYTCHRMECIAB"/>
</dbReference>
<dbReference type="SUPFAM" id="SSF46626">
    <property type="entry name" value="Cytochrome c"/>
    <property type="match status" value="1"/>
</dbReference>
<dbReference type="PROSITE" id="PS51007">
    <property type="entry name" value="CYTC"/>
    <property type="match status" value="1"/>
</dbReference>
<name>CYC_GINBI</name>
<reference key="1">
    <citation type="journal article" date="1971" name="Eur. J. Biochem.">
        <title>The amino-acid sequence of the cytochrome c of Ginkgo biloba L.</title>
        <authorList>
            <person name="Ramshaw J.A.M."/>
            <person name="Richardson M."/>
            <person name="Boulter D."/>
        </authorList>
    </citation>
    <scope>PROTEIN SEQUENCE</scope>
    <scope>ACETYLATION AT ALA-1</scope>
    <scope>METHYLATION AT LYS-80 AND LYS-94</scope>
</reference>
<protein>
    <recommendedName>
        <fullName>Cytochrome c</fullName>
    </recommendedName>
</protein>
<sequence>ATFSEAPPGDPKAGEKIFKTKCAZCHTVZKGAGHKQGPNLHGLFGRQSGTTAGYSYSTGNKNKAVNWGZZTLYEYLLNPKKYIPGTKMVFPGLKKPZZRADLISYLKQATSQE</sequence>
<keyword id="KW-0007">Acetylation</keyword>
<keyword id="KW-0903">Direct protein sequencing</keyword>
<keyword id="KW-0249">Electron transport</keyword>
<keyword id="KW-0349">Heme</keyword>
<keyword id="KW-0408">Iron</keyword>
<keyword id="KW-0479">Metal-binding</keyword>
<keyword id="KW-0488">Methylation</keyword>
<keyword id="KW-0496">Mitochondrion</keyword>
<keyword id="KW-0679">Respiratory chain</keyword>
<keyword id="KW-0813">Transport</keyword>